<dbReference type="EMBL" id="AC069154">
    <property type="protein sequence ID" value="AAY24148.1"/>
    <property type="molecule type" value="Genomic_DNA"/>
</dbReference>
<dbReference type="EMBL" id="BC004404">
    <property type="protein sequence ID" value="AAH04404.1"/>
    <property type="molecule type" value="mRNA"/>
</dbReference>
<dbReference type="CCDS" id="CCDS2128.1"/>
<dbReference type="RefSeq" id="NP_001098668.1">
    <property type="nucleotide sequence ID" value="NM_001105198.2"/>
</dbReference>
<dbReference type="RefSeq" id="NP_001098669.1">
    <property type="nucleotide sequence ID" value="NM_001105199.2"/>
</dbReference>
<dbReference type="RefSeq" id="NP_085054.2">
    <property type="nucleotide sequence ID" value="NM_030577.3"/>
</dbReference>
<dbReference type="BioGRID" id="123307">
    <property type="interactions" value="50"/>
</dbReference>
<dbReference type="FunCoup" id="Q53S58">
    <property type="interactions" value="410"/>
</dbReference>
<dbReference type="IntAct" id="Q53S58">
    <property type="interactions" value="11"/>
</dbReference>
<dbReference type="STRING" id="9606.ENSP00000402661"/>
<dbReference type="iPTMnet" id="Q53S58"/>
<dbReference type="PhosphoSitePlus" id="Q53S58"/>
<dbReference type="BioMuta" id="TMEM177"/>
<dbReference type="DMDM" id="74727288"/>
<dbReference type="jPOST" id="Q53S58"/>
<dbReference type="MassIVE" id="Q53S58"/>
<dbReference type="PaxDb" id="9606-ENSP00000402661"/>
<dbReference type="PeptideAtlas" id="Q53S58"/>
<dbReference type="ProteomicsDB" id="62533"/>
<dbReference type="Pumba" id="Q53S58"/>
<dbReference type="Antibodypedia" id="58266">
    <property type="antibodies" value="58 antibodies from 14 providers"/>
</dbReference>
<dbReference type="DNASU" id="80775"/>
<dbReference type="Ensembl" id="ENST00000272521.7">
    <property type="protein sequence ID" value="ENSP00000272521.6"/>
    <property type="gene ID" value="ENSG00000144120.13"/>
</dbReference>
<dbReference type="Ensembl" id="ENST00000401466.5">
    <property type="protein sequence ID" value="ENSP00000385966.1"/>
    <property type="gene ID" value="ENSG00000144120.13"/>
</dbReference>
<dbReference type="Ensembl" id="ENST00000424086.5">
    <property type="protein sequence ID" value="ENSP00000402661.1"/>
    <property type="gene ID" value="ENSG00000144120.13"/>
</dbReference>
<dbReference type="GeneID" id="80775"/>
<dbReference type="KEGG" id="hsa:80775"/>
<dbReference type="MANE-Select" id="ENST00000272521.7">
    <property type="protein sequence ID" value="ENSP00000272521.6"/>
    <property type="RefSeq nucleotide sequence ID" value="NM_030577.3"/>
    <property type="RefSeq protein sequence ID" value="NP_085054.2"/>
</dbReference>
<dbReference type="UCSC" id="uc002tmc.1">
    <property type="organism name" value="human"/>
</dbReference>
<dbReference type="AGR" id="HGNC:28143"/>
<dbReference type="CTD" id="80775"/>
<dbReference type="DisGeNET" id="80775"/>
<dbReference type="GeneCards" id="TMEM177"/>
<dbReference type="HGNC" id="HGNC:28143">
    <property type="gene designation" value="TMEM177"/>
</dbReference>
<dbReference type="HPA" id="ENSG00000144120">
    <property type="expression patterns" value="Low tissue specificity"/>
</dbReference>
<dbReference type="MIM" id="620752">
    <property type="type" value="gene"/>
</dbReference>
<dbReference type="neXtProt" id="NX_Q53S58"/>
<dbReference type="OpenTargets" id="ENSG00000144120"/>
<dbReference type="PharmGKB" id="PA162405985"/>
<dbReference type="VEuPathDB" id="HostDB:ENSG00000144120"/>
<dbReference type="eggNOG" id="ENOG502QPPU">
    <property type="taxonomic scope" value="Eukaryota"/>
</dbReference>
<dbReference type="GeneTree" id="ENSGT00390000010354"/>
<dbReference type="HOGENOM" id="CLU_074208_0_0_1"/>
<dbReference type="InParanoid" id="Q53S58"/>
<dbReference type="OMA" id="HTFGLKY"/>
<dbReference type="OrthoDB" id="110174at2759"/>
<dbReference type="PAN-GO" id="Q53S58">
    <property type="GO annotations" value="1 GO annotation based on evolutionary models"/>
</dbReference>
<dbReference type="PhylomeDB" id="Q53S58"/>
<dbReference type="TreeFam" id="TF328369"/>
<dbReference type="PathwayCommons" id="Q53S58"/>
<dbReference type="Reactome" id="R-HSA-9864848">
    <property type="pathway name" value="Complex IV assembly"/>
</dbReference>
<dbReference type="SignaLink" id="Q53S58"/>
<dbReference type="BioGRID-ORCS" id="80775">
    <property type="hits" value="12 hits in 1160 CRISPR screens"/>
</dbReference>
<dbReference type="ChiTaRS" id="TMEM177">
    <property type="organism name" value="human"/>
</dbReference>
<dbReference type="GenomeRNAi" id="80775"/>
<dbReference type="Pharos" id="Q53S58">
    <property type="development level" value="Tdark"/>
</dbReference>
<dbReference type="PRO" id="PR:Q53S58"/>
<dbReference type="Proteomes" id="UP000005640">
    <property type="component" value="Chromosome 2"/>
</dbReference>
<dbReference type="RNAct" id="Q53S58">
    <property type="molecule type" value="protein"/>
</dbReference>
<dbReference type="Bgee" id="ENSG00000144120">
    <property type="expression patterns" value="Expressed in mucosa of transverse colon and 150 other cell types or tissues"/>
</dbReference>
<dbReference type="ExpressionAtlas" id="Q53S58">
    <property type="expression patterns" value="baseline and differential"/>
</dbReference>
<dbReference type="GO" id="GO:0016020">
    <property type="term" value="C:membrane"/>
    <property type="evidence" value="ECO:0000318"/>
    <property type="project" value="GO_Central"/>
</dbReference>
<dbReference type="GO" id="GO:0005743">
    <property type="term" value="C:mitochondrial inner membrane"/>
    <property type="evidence" value="ECO:0000314"/>
    <property type="project" value="UniProtKB"/>
</dbReference>
<dbReference type="GO" id="GO:0005739">
    <property type="term" value="C:mitochondrion"/>
    <property type="evidence" value="ECO:0006056"/>
    <property type="project" value="FlyBase"/>
</dbReference>
<dbReference type="InterPro" id="IPR026620">
    <property type="entry name" value="TMEM177"/>
</dbReference>
<dbReference type="PANTHER" id="PTHR21824">
    <property type="entry name" value="TRANSMEMBRANE PROTEIN 177"/>
    <property type="match status" value="1"/>
</dbReference>
<dbReference type="PANTHER" id="PTHR21824:SF4">
    <property type="entry name" value="TRANSMEMBRANE PROTEIN 177"/>
    <property type="match status" value="1"/>
</dbReference>
<gene>
    <name type="primary">TMEM177</name>
</gene>
<accession>Q53S58</accession>
<accession>Q9BT20</accession>
<keyword id="KW-0472">Membrane</keyword>
<keyword id="KW-0496">Mitochondrion</keyword>
<keyword id="KW-0999">Mitochondrion inner membrane</keyword>
<keyword id="KW-1267">Proteomics identification</keyword>
<keyword id="KW-1185">Reference proteome</keyword>
<keyword id="KW-0812">Transmembrane</keyword>
<keyword id="KW-1133">Transmembrane helix</keyword>
<evidence type="ECO:0000255" key="1"/>
<evidence type="ECO:0000269" key="2">
    <source>
    </source>
</evidence>
<evidence type="ECO:0000269" key="3">
    <source>
    </source>
</evidence>
<evidence type="ECO:0000305" key="4"/>
<evidence type="ECO:0000305" key="5">
    <source>
    </source>
</evidence>
<proteinExistence type="evidence at protein level"/>
<feature type="chain" id="PRO_0000282646" description="Transmembrane protein 177">
    <location>
        <begin position="1"/>
        <end position="311"/>
    </location>
</feature>
<feature type="topological domain" description="Mitochondrial matrix" evidence="5">
    <location>
        <begin position="1"/>
        <end position="17"/>
    </location>
</feature>
<feature type="transmembrane region" description="Helical" evidence="1">
    <location>
        <begin position="18"/>
        <end position="38"/>
    </location>
</feature>
<feature type="topological domain" description="Mitochondrial intermembrane" evidence="5">
    <location>
        <begin position="39"/>
        <end position="166"/>
    </location>
</feature>
<feature type="transmembrane region" description="Helical" evidence="1">
    <location>
        <begin position="167"/>
        <end position="187"/>
    </location>
</feature>
<feature type="topological domain" description="Mitochondrial matrix" evidence="5">
    <location>
        <begin position="188"/>
        <end position="197"/>
    </location>
</feature>
<feature type="transmembrane region" description="Helical" evidence="1">
    <location>
        <begin position="198"/>
        <end position="218"/>
    </location>
</feature>
<feature type="topological domain" description="Mitochondrial intermembrane" evidence="5">
    <location>
        <begin position="219"/>
        <end position="311"/>
    </location>
</feature>
<feature type="sequence variant" id="VAR_031421" description="In dbSNP:rs11684353.">
    <original>G</original>
    <variation>A</variation>
    <location>
        <position position="29"/>
    </location>
</feature>
<feature type="sequence variant" id="VAR_031422" description="In dbSNP:rs13011768." evidence="2">
    <original>I</original>
    <variation>V</variation>
    <location>
        <position position="32"/>
    </location>
</feature>
<feature type="sequence variant" id="VAR_031423" description="In dbSNP:rs1983406." evidence="2">
    <original>D</original>
    <variation>E</variation>
    <location>
        <position position="267"/>
    </location>
</feature>
<name>TM177_HUMAN</name>
<protein>
    <recommendedName>
        <fullName>Transmembrane protein 177</fullName>
    </recommendedName>
</protein>
<organism>
    <name type="scientific">Homo sapiens</name>
    <name type="common">Human</name>
    <dbReference type="NCBI Taxonomy" id="9606"/>
    <lineage>
        <taxon>Eukaryota</taxon>
        <taxon>Metazoa</taxon>
        <taxon>Chordata</taxon>
        <taxon>Craniata</taxon>
        <taxon>Vertebrata</taxon>
        <taxon>Euteleostomi</taxon>
        <taxon>Mammalia</taxon>
        <taxon>Eutheria</taxon>
        <taxon>Euarchontoglires</taxon>
        <taxon>Primates</taxon>
        <taxon>Haplorrhini</taxon>
        <taxon>Catarrhini</taxon>
        <taxon>Hominidae</taxon>
        <taxon>Homo</taxon>
    </lineage>
</organism>
<comment type="function">
    <text evidence="3">Plays a role in the early steps of cytochrome c oxidase subunit II (MT-CO2/COX2) maturation and is required for the stabilization of COX20 and the newly synthesized MT-CO2/COX2 protein.</text>
</comment>
<comment type="subunit">
    <text evidence="3">Found in a complex with COX20, COA6, MT-CO2/COX2, COX18, SCO1 and SCO2. Interacts with COX20. Interacts with COX1, MT-CO2/COX2, SCO1 and SCO2 in a COX20-dependent manner.</text>
</comment>
<comment type="subcellular location">
    <subcellularLocation>
        <location evidence="3">Mitochondrion inner membrane</location>
        <topology evidence="1">Multi-pass membrane protein</topology>
    </subcellularLocation>
</comment>
<comment type="similarity">
    <text evidence="4">Belongs to the TMEM177 family.</text>
</comment>
<reference key="1">
    <citation type="journal article" date="2005" name="Nature">
        <title>Generation and annotation of the DNA sequences of human chromosomes 2 and 4.</title>
        <authorList>
            <person name="Hillier L.W."/>
            <person name="Graves T.A."/>
            <person name="Fulton R.S."/>
            <person name="Fulton L.A."/>
            <person name="Pepin K.H."/>
            <person name="Minx P."/>
            <person name="Wagner-McPherson C."/>
            <person name="Layman D."/>
            <person name="Wylie K."/>
            <person name="Sekhon M."/>
            <person name="Becker M.C."/>
            <person name="Fewell G.A."/>
            <person name="Delehaunty K.D."/>
            <person name="Miner T.L."/>
            <person name="Nash W.E."/>
            <person name="Kremitzki C."/>
            <person name="Oddy L."/>
            <person name="Du H."/>
            <person name="Sun H."/>
            <person name="Bradshaw-Cordum H."/>
            <person name="Ali J."/>
            <person name="Carter J."/>
            <person name="Cordes M."/>
            <person name="Harris A."/>
            <person name="Isak A."/>
            <person name="van Brunt A."/>
            <person name="Nguyen C."/>
            <person name="Du F."/>
            <person name="Courtney L."/>
            <person name="Kalicki J."/>
            <person name="Ozersky P."/>
            <person name="Abbott S."/>
            <person name="Armstrong J."/>
            <person name="Belter E.A."/>
            <person name="Caruso L."/>
            <person name="Cedroni M."/>
            <person name="Cotton M."/>
            <person name="Davidson T."/>
            <person name="Desai A."/>
            <person name="Elliott G."/>
            <person name="Erb T."/>
            <person name="Fronick C."/>
            <person name="Gaige T."/>
            <person name="Haakenson W."/>
            <person name="Haglund K."/>
            <person name="Holmes A."/>
            <person name="Harkins R."/>
            <person name="Kim K."/>
            <person name="Kruchowski S.S."/>
            <person name="Strong C.M."/>
            <person name="Grewal N."/>
            <person name="Goyea E."/>
            <person name="Hou S."/>
            <person name="Levy A."/>
            <person name="Martinka S."/>
            <person name="Mead K."/>
            <person name="McLellan M.D."/>
            <person name="Meyer R."/>
            <person name="Randall-Maher J."/>
            <person name="Tomlinson C."/>
            <person name="Dauphin-Kohlberg S."/>
            <person name="Kozlowicz-Reilly A."/>
            <person name="Shah N."/>
            <person name="Swearengen-Shahid S."/>
            <person name="Snider J."/>
            <person name="Strong J.T."/>
            <person name="Thompson J."/>
            <person name="Yoakum M."/>
            <person name="Leonard S."/>
            <person name="Pearman C."/>
            <person name="Trani L."/>
            <person name="Radionenko M."/>
            <person name="Waligorski J.E."/>
            <person name="Wang C."/>
            <person name="Rock S.M."/>
            <person name="Tin-Wollam A.-M."/>
            <person name="Maupin R."/>
            <person name="Latreille P."/>
            <person name="Wendl M.C."/>
            <person name="Yang S.-P."/>
            <person name="Pohl C."/>
            <person name="Wallis J.W."/>
            <person name="Spieth J."/>
            <person name="Bieri T.A."/>
            <person name="Berkowicz N."/>
            <person name="Nelson J.O."/>
            <person name="Osborne J."/>
            <person name="Ding L."/>
            <person name="Meyer R."/>
            <person name="Sabo A."/>
            <person name="Shotland Y."/>
            <person name="Sinha P."/>
            <person name="Wohldmann P.E."/>
            <person name="Cook L.L."/>
            <person name="Hickenbotham M.T."/>
            <person name="Eldred J."/>
            <person name="Williams D."/>
            <person name="Jones T.A."/>
            <person name="She X."/>
            <person name="Ciccarelli F.D."/>
            <person name="Izaurralde E."/>
            <person name="Taylor J."/>
            <person name="Schmutz J."/>
            <person name="Myers R.M."/>
            <person name="Cox D.R."/>
            <person name="Huang X."/>
            <person name="McPherson J.D."/>
            <person name="Mardis E.R."/>
            <person name="Clifton S.W."/>
            <person name="Warren W.C."/>
            <person name="Chinwalla A.T."/>
            <person name="Eddy S.R."/>
            <person name="Marra M.A."/>
            <person name="Ovcharenko I."/>
            <person name="Furey T.S."/>
            <person name="Miller W."/>
            <person name="Eichler E.E."/>
            <person name="Bork P."/>
            <person name="Suyama M."/>
            <person name="Torrents D."/>
            <person name="Waterston R.H."/>
            <person name="Wilson R.K."/>
        </authorList>
    </citation>
    <scope>NUCLEOTIDE SEQUENCE [LARGE SCALE GENOMIC DNA]</scope>
</reference>
<reference key="2">
    <citation type="journal article" date="2004" name="Genome Res.">
        <title>The status, quality, and expansion of the NIH full-length cDNA project: the Mammalian Gene Collection (MGC).</title>
        <authorList>
            <consortium name="The MGC Project Team"/>
        </authorList>
    </citation>
    <scope>NUCLEOTIDE SEQUENCE [LARGE SCALE MRNA]</scope>
    <scope>VARIANTS VAL-32 AND GLU-267</scope>
    <source>
        <tissue>Placenta</tissue>
    </source>
</reference>
<reference key="3">
    <citation type="journal article" date="2017" name="Biochim. Biophys. Acta">
        <title>The mitochondrial TMEM177 associates with COX20 during COX2 biogenesis.</title>
        <authorList>
            <person name="Lorenzi I."/>
            <person name="Oeljeklaus S."/>
            <person name="Aich A."/>
            <person name="Ronsoer C."/>
            <person name="Callegari S."/>
            <person name="Dudek J."/>
            <person name="Warscheid B."/>
            <person name="Dennerlein S."/>
            <person name="Rehling P."/>
        </authorList>
    </citation>
    <scope>FUNCTION</scope>
    <scope>SUBCELLULAR LOCATION</scope>
    <scope>TOPOLOGY</scope>
    <scope>IDENTIFICATION IN A COMPLEX WITH COX20; COA6; MT-CO2; COX18; SCO1 AND SCO2</scope>
    <scope>INTERACTION WITH COX20; COX1; MT-CO2; SCO1 AND SCO2</scope>
</reference>
<sequence length="311" mass="33760">MAGPLWRTAAFVQRHRTGLLVGSCAGLFGVPISYHLFPDPVVQWLYQYWPQGQPAPLPPQLQSLFQEVLQDIGVPSGHCYKPFTTFTFQPVSAGFPRLPAGAVVGIPASFLGDLVINTNHPVVIHGHTVDWRSPAGARLRASLTLSREAQKFALAREVVYLESSTTAVHALLAPACLAGTWALGVGAKYTLGLHAGPMNLRAAFSLVAAVAGFVAYAFSQDSLTHAVESWLDRRTASLSAAYACGGVEFYEKLLSGNLALRSLLGKDGEKLYTPSGNIVPRHLFRIKHLPYTTRRDSVLQMWRGMLNPGRS</sequence>